<evidence type="ECO:0000255" key="1">
    <source>
        <dbReference type="HAMAP-Rule" id="MF_00158"/>
    </source>
</evidence>
<feature type="chain" id="PRO_1000097079" description="Pantothenate synthetase">
    <location>
        <begin position="1"/>
        <end position="283"/>
    </location>
</feature>
<feature type="active site" description="Proton donor" evidence="1">
    <location>
        <position position="37"/>
    </location>
</feature>
<feature type="binding site" evidence="1">
    <location>
        <begin position="30"/>
        <end position="37"/>
    </location>
    <ligand>
        <name>ATP</name>
        <dbReference type="ChEBI" id="CHEBI:30616"/>
    </ligand>
</feature>
<feature type="binding site" evidence="1">
    <location>
        <position position="61"/>
    </location>
    <ligand>
        <name>(R)-pantoate</name>
        <dbReference type="ChEBI" id="CHEBI:15980"/>
    </ligand>
</feature>
<feature type="binding site" evidence="1">
    <location>
        <position position="61"/>
    </location>
    <ligand>
        <name>beta-alanine</name>
        <dbReference type="ChEBI" id="CHEBI:57966"/>
    </ligand>
</feature>
<feature type="binding site" evidence="1">
    <location>
        <begin position="148"/>
        <end position="151"/>
    </location>
    <ligand>
        <name>ATP</name>
        <dbReference type="ChEBI" id="CHEBI:30616"/>
    </ligand>
</feature>
<feature type="binding site" evidence="1">
    <location>
        <position position="154"/>
    </location>
    <ligand>
        <name>(R)-pantoate</name>
        <dbReference type="ChEBI" id="CHEBI:15980"/>
    </ligand>
</feature>
<feature type="binding site" evidence="1">
    <location>
        <begin position="185"/>
        <end position="188"/>
    </location>
    <ligand>
        <name>ATP</name>
        <dbReference type="ChEBI" id="CHEBI:30616"/>
    </ligand>
</feature>
<reference key="1">
    <citation type="journal article" date="2008" name="PLoS ONE">
        <title>Genome sequence of the saprophyte Leptospira biflexa provides insights into the evolution of Leptospira and the pathogenesis of leptospirosis.</title>
        <authorList>
            <person name="Picardeau M."/>
            <person name="Bulach D.M."/>
            <person name="Bouchier C."/>
            <person name="Zuerner R.L."/>
            <person name="Zidane N."/>
            <person name="Wilson P.J."/>
            <person name="Creno S."/>
            <person name="Kuczek E.S."/>
            <person name="Bommezzadri S."/>
            <person name="Davis J.C."/>
            <person name="McGrath A."/>
            <person name="Johnson M.J."/>
            <person name="Boursaux-Eude C."/>
            <person name="Seemann T."/>
            <person name="Rouy Z."/>
            <person name="Coppel R.L."/>
            <person name="Rood J.I."/>
            <person name="Lajus A."/>
            <person name="Davies J.K."/>
            <person name="Medigue C."/>
            <person name="Adler B."/>
        </authorList>
    </citation>
    <scope>NUCLEOTIDE SEQUENCE [LARGE SCALE GENOMIC DNA]</scope>
    <source>
        <strain>Patoc 1 / Ames</strain>
    </source>
</reference>
<accession>B0S9F1</accession>
<sequence>MIVVSEIADLKTIISEWKQNQETIGFCPTMGTLHDGHMDLVKTSKGQCTKTIVSIFINPTQFNDPKDFDAYPKNTESDLKLCEEHGVDLVFLPSVEVIYPKSQTPIQMSIPSLQTTLCGRTRPGHFEGVLQIVSKLFHLTEPNYGFFGLKDYQQYRIISAMVEELNFPIKILGVPTKRESDGLAMSSRNLRLSPKDRETASLIPRMFQLAKKTLLGGEKNLIVWKEILTDFLLTGSNVKIDYLEIVDPITLQPLSNLNGELLLATAVFVGEVRLIDNEVLVSP</sequence>
<name>PANC_LEPBA</name>
<protein>
    <recommendedName>
        <fullName evidence="1">Pantothenate synthetase</fullName>
        <shortName evidence="1">PS</shortName>
        <ecNumber evidence="1">6.3.2.1</ecNumber>
    </recommendedName>
    <alternativeName>
        <fullName evidence="1">Pantoate--beta-alanine ligase</fullName>
    </alternativeName>
    <alternativeName>
        <fullName evidence="1">Pantoate-activating enzyme</fullName>
    </alternativeName>
</protein>
<dbReference type="EC" id="6.3.2.1" evidence="1"/>
<dbReference type="EMBL" id="CP000777">
    <property type="protein sequence ID" value="ABZ94278.1"/>
    <property type="molecule type" value="Genomic_DNA"/>
</dbReference>
<dbReference type="RefSeq" id="WP_012388808.1">
    <property type="nucleotide sequence ID" value="NC_010842.1"/>
</dbReference>
<dbReference type="SMR" id="B0S9F1"/>
<dbReference type="KEGG" id="lbf:LBF_1771"/>
<dbReference type="HOGENOM" id="CLU_047148_0_0_12"/>
<dbReference type="UniPathway" id="UPA00028">
    <property type="reaction ID" value="UER00005"/>
</dbReference>
<dbReference type="GO" id="GO:0005829">
    <property type="term" value="C:cytosol"/>
    <property type="evidence" value="ECO:0007669"/>
    <property type="project" value="TreeGrafter"/>
</dbReference>
<dbReference type="GO" id="GO:0005524">
    <property type="term" value="F:ATP binding"/>
    <property type="evidence" value="ECO:0007669"/>
    <property type="project" value="UniProtKB-KW"/>
</dbReference>
<dbReference type="GO" id="GO:0004592">
    <property type="term" value="F:pantoate-beta-alanine ligase activity"/>
    <property type="evidence" value="ECO:0007669"/>
    <property type="project" value="UniProtKB-UniRule"/>
</dbReference>
<dbReference type="GO" id="GO:0015940">
    <property type="term" value="P:pantothenate biosynthetic process"/>
    <property type="evidence" value="ECO:0007669"/>
    <property type="project" value="UniProtKB-UniRule"/>
</dbReference>
<dbReference type="CDD" id="cd00560">
    <property type="entry name" value="PanC"/>
    <property type="match status" value="1"/>
</dbReference>
<dbReference type="Gene3D" id="3.40.50.620">
    <property type="entry name" value="HUPs"/>
    <property type="match status" value="1"/>
</dbReference>
<dbReference type="Gene3D" id="3.30.1300.10">
    <property type="entry name" value="Pantoate-beta-alanine ligase, C-terminal domain"/>
    <property type="match status" value="1"/>
</dbReference>
<dbReference type="HAMAP" id="MF_00158">
    <property type="entry name" value="PanC"/>
    <property type="match status" value="1"/>
</dbReference>
<dbReference type="InterPro" id="IPR003721">
    <property type="entry name" value="Pantoate_ligase"/>
</dbReference>
<dbReference type="InterPro" id="IPR042176">
    <property type="entry name" value="Pantoate_ligase_C"/>
</dbReference>
<dbReference type="InterPro" id="IPR014729">
    <property type="entry name" value="Rossmann-like_a/b/a_fold"/>
</dbReference>
<dbReference type="NCBIfam" id="TIGR00018">
    <property type="entry name" value="panC"/>
    <property type="match status" value="1"/>
</dbReference>
<dbReference type="PANTHER" id="PTHR21299">
    <property type="entry name" value="CYTIDYLATE KINASE/PANTOATE-BETA-ALANINE LIGASE"/>
    <property type="match status" value="1"/>
</dbReference>
<dbReference type="PANTHER" id="PTHR21299:SF1">
    <property type="entry name" value="PANTOATE--BETA-ALANINE LIGASE"/>
    <property type="match status" value="1"/>
</dbReference>
<dbReference type="Pfam" id="PF02569">
    <property type="entry name" value="Pantoate_ligase"/>
    <property type="match status" value="1"/>
</dbReference>
<dbReference type="SUPFAM" id="SSF52374">
    <property type="entry name" value="Nucleotidylyl transferase"/>
    <property type="match status" value="1"/>
</dbReference>
<comment type="function">
    <text evidence="1">Catalyzes the condensation of pantoate with beta-alanine in an ATP-dependent reaction via a pantoyl-adenylate intermediate.</text>
</comment>
<comment type="catalytic activity">
    <reaction evidence="1">
        <text>(R)-pantoate + beta-alanine + ATP = (R)-pantothenate + AMP + diphosphate + H(+)</text>
        <dbReference type="Rhea" id="RHEA:10912"/>
        <dbReference type="ChEBI" id="CHEBI:15378"/>
        <dbReference type="ChEBI" id="CHEBI:15980"/>
        <dbReference type="ChEBI" id="CHEBI:29032"/>
        <dbReference type="ChEBI" id="CHEBI:30616"/>
        <dbReference type="ChEBI" id="CHEBI:33019"/>
        <dbReference type="ChEBI" id="CHEBI:57966"/>
        <dbReference type="ChEBI" id="CHEBI:456215"/>
        <dbReference type="EC" id="6.3.2.1"/>
    </reaction>
</comment>
<comment type="pathway">
    <text evidence="1">Cofactor biosynthesis; (R)-pantothenate biosynthesis; (R)-pantothenate from (R)-pantoate and beta-alanine: step 1/1.</text>
</comment>
<comment type="subunit">
    <text evidence="1">Homodimer.</text>
</comment>
<comment type="subcellular location">
    <subcellularLocation>
        <location evidence="1">Cytoplasm</location>
    </subcellularLocation>
</comment>
<comment type="miscellaneous">
    <text evidence="1">The reaction proceeds by a bi uni uni bi ping pong mechanism.</text>
</comment>
<comment type="similarity">
    <text evidence="1">Belongs to the pantothenate synthetase family.</text>
</comment>
<organism>
    <name type="scientific">Leptospira biflexa serovar Patoc (strain Patoc 1 / Ames)</name>
    <dbReference type="NCBI Taxonomy" id="355278"/>
    <lineage>
        <taxon>Bacteria</taxon>
        <taxon>Pseudomonadati</taxon>
        <taxon>Spirochaetota</taxon>
        <taxon>Spirochaetia</taxon>
        <taxon>Leptospirales</taxon>
        <taxon>Leptospiraceae</taxon>
        <taxon>Leptospira</taxon>
    </lineage>
</organism>
<keyword id="KW-0067">ATP-binding</keyword>
<keyword id="KW-0963">Cytoplasm</keyword>
<keyword id="KW-0436">Ligase</keyword>
<keyword id="KW-0547">Nucleotide-binding</keyword>
<keyword id="KW-0566">Pantothenate biosynthesis</keyword>
<proteinExistence type="inferred from homology"/>
<gene>
    <name evidence="1" type="primary">panC</name>
    <name type="ordered locus">LBF_1771</name>
</gene>